<keyword id="KW-0687">Ribonucleoprotein</keyword>
<keyword id="KW-0689">Ribosomal protein</keyword>
<comment type="similarity">
    <text evidence="1">Belongs to the bacterial ribosomal protein bS16 family.</text>
</comment>
<proteinExistence type="inferred from homology"/>
<organism>
    <name type="scientific">Pseudomonas savastanoi pv. phaseolicola (strain 1448A / Race 6)</name>
    <name type="common">Pseudomonas syringae pv. phaseolicola (strain 1448A / Race 6)</name>
    <dbReference type="NCBI Taxonomy" id="264730"/>
    <lineage>
        <taxon>Bacteria</taxon>
        <taxon>Pseudomonadati</taxon>
        <taxon>Pseudomonadota</taxon>
        <taxon>Gammaproteobacteria</taxon>
        <taxon>Pseudomonadales</taxon>
        <taxon>Pseudomonadaceae</taxon>
        <taxon>Pseudomonas</taxon>
    </lineage>
</organism>
<accession>Q48LW0</accession>
<protein>
    <recommendedName>
        <fullName evidence="1">Small ribosomal subunit protein bS16</fullName>
    </recommendedName>
    <alternativeName>
        <fullName evidence="2">30S ribosomal protein S16</fullName>
    </alternativeName>
</protein>
<reference key="1">
    <citation type="journal article" date="2005" name="J. Bacteriol.">
        <title>Whole-genome sequence analysis of Pseudomonas syringae pv. phaseolicola 1448A reveals divergence among pathovars in genes involved in virulence and transposition.</title>
        <authorList>
            <person name="Joardar V."/>
            <person name="Lindeberg M."/>
            <person name="Jackson R.W."/>
            <person name="Selengut J."/>
            <person name="Dodson R."/>
            <person name="Brinkac L.M."/>
            <person name="Daugherty S.C."/>
            <person name="DeBoy R.T."/>
            <person name="Durkin A.S."/>
            <person name="Gwinn Giglio M."/>
            <person name="Madupu R."/>
            <person name="Nelson W.C."/>
            <person name="Rosovitz M.J."/>
            <person name="Sullivan S.A."/>
            <person name="Crabtree J."/>
            <person name="Creasy T."/>
            <person name="Davidsen T.M."/>
            <person name="Haft D.H."/>
            <person name="Zafar N."/>
            <person name="Zhou L."/>
            <person name="Halpin R."/>
            <person name="Holley T."/>
            <person name="Khouri H.M."/>
            <person name="Feldblyum T.V."/>
            <person name="White O."/>
            <person name="Fraser C.M."/>
            <person name="Chatterjee A.K."/>
            <person name="Cartinhour S."/>
            <person name="Schneider D."/>
            <person name="Mansfield J.W."/>
            <person name="Collmer A."/>
            <person name="Buell R."/>
        </authorList>
    </citation>
    <scope>NUCLEOTIDE SEQUENCE [LARGE SCALE GENOMIC DNA]</scope>
    <source>
        <strain>1448A / Race 6</strain>
    </source>
</reference>
<name>RS16_PSE14</name>
<evidence type="ECO:0000255" key="1">
    <source>
        <dbReference type="HAMAP-Rule" id="MF_00385"/>
    </source>
</evidence>
<evidence type="ECO:0000305" key="2"/>
<gene>
    <name evidence="1" type="primary">rpsP</name>
    <name type="ordered locus">PSPPH_1354</name>
</gene>
<dbReference type="EMBL" id="CP000058">
    <property type="protein sequence ID" value="AAZ34837.1"/>
    <property type="molecule type" value="Genomic_DNA"/>
</dbReference>
<dbReference type="RefSeq" id="WP_002552521.1">
    <property type="nucleotide sequence ID" value="NC_005773.3"/>
</dbReference>
<dbReference type="SMR" id="Q48LW0"/>
<dbReference type="GeneID" id="96217686"/>
<dbReference type="KEGG" id="psp:PSPPH_1354"/>
<dbReference type="eggNOG" id="COG0228">
    <property type="taxonomic scope" value="Bacteria"/>
</dbReference>
<dbReference type="HOGENOM" id="CLU_100590_5_1_6"/>
<dbReference type="Proteomes" id="UP000000551">
    <property type="component" value="Chromosome"/>
</dbReference>
<dbReference type="GO" id="GO:0005737">
    <property type="term" value="C:cytoplasm"/>
    <property type="evidence" value="ECO:0007669"/>
    <property type="project" value="UniProtKB-ARBA"/>
</dbReference>
<dbReference type="GO" id="GO:0015935">
    <property type="term" value="C:small ribosomal subunit"/>
    <property type="evidence" value="ECO:0007669"/>
    <property type="project" value="TreeGrafter"/>
</dbReference>
<dbReference type="GO" id="GO:0003735">
    <property type="term" value="F:structural constituent of ribosome"/>
    <property type="evidence" value="ECO:0007669"/>
    <property type="project" value="InterPro"/>
</dbReference>
<dbReference type="GO" id="GO:0006412">
    <property type="term" value="P:translation"/>
    <property type="evidence" value="ECO:0007669"/>
    <property type="project" value="UniProtKB-UniRule"/>
</dbReference>
<dbReference type="Gene3D" id="3.30.1320.10">
    <property type="match status" value="1"/>
</dbReference>
<dbReference type="HAMAP" id="MF_00385">
    <property type="entry name" value="Ribosomal_bS16"/>
    <property type="match status" value="1"/>
</dbReference>
<dbReference type="InterPro" id="IPR000307">
    <property type="entry name" value="Ribosomal_bS16"/>
</dbReference>
<dbReference type="InterPro" id="IPR023803">
    <property type="entry name" value="Ribosomal_bS16_dom_sf"/>
</dbReference>
<dbReference type="NCBIfam" id="TIGR00002">
    <property type="entry name" value="S16"/>
    <property type="match status" value="1"/>
</dbReference>
<dbReference type="PANTHER" id="PTHR12919">
    <property type="entry name" value="30S RIBOSOMAL PROTEIN S16"/>
    <property type="match status" value="1"/>
</dbReference>
<dbReference type="PANTHER" id="PTHR12919:SF20">
    <property type="entry name" value="SMALL RIBOSOMAL SUBUNIT PROTEIN BS16M"/>
    <property type="match status" value="1"/>
</dbReference>
<dbReference type="Pfam" id="PF00886">
    <property type="entry name" value="Ribosomal_S16"/>
    <property type="match status" value="1"/>
</dbReference>
<dbReference type="SUPFAM" id="SSF54565">
    <property type="entry name" value="Ribosomal protein S16"/>
    <property type="match status" value="1"/>
</dbReference>
<feature type="chain" id="PRO_0000243851" description="Small ribosomal subunit protein bS16">
    <location>
        <begin position="1"/>
        <end position="85"/>
    </location>
</feature>
<sequence>MLTIRLALGGSKKRPFYHLTVTDSRNARDGSHKEQVGFFNPVARGQEIRLSVNEERVNYWLSVGAQTSERVAQLLKEHNKTKAAA</sequence>